<accession>Q04EH0</accession>
<name>RL35_OENOB</name>
<organism>
    <name type="scientific">Oenococcus oeni (strain ATCC BAA-331 / PSU-1)</name>
    <dbReference type="NCBI Taxonomy" id="203123"/>
    <lineage>
        <taxon>Bacteria</taxon>
        <taxon>Bacillati</taxon>
        <taxon>Bacillota</taxon>
        <taxon>Bacilli</taxon>
        <taxon>Lactobacillales</taxon>
        <taxon>Lactobacillaceae</taxon>
        <taxon>Oenococcus</taxon>
    </lineage>
</organism>
<comment type="similarity">
    <text evidence="1">Belongs to the bacterial ribosomal protein bL35 family.</text>
</comment>
<evidence type="ECO:0000255" key="1">
    <source>
        <dbReference type="HAMAP-Rule" id="MF_00514"/>
    </source>
</evidence>
<evidence type="ECO:0000256" key="2">
    <source>
        <dbReference type="SAM" id="MobiDB-lite"/>
    </source>
</evidence>
<evidence type="ECO:0000305" key="3"/>
<reference key="1">
    <citation type="journal article" date="2006" name="Proc. Natl. Acad. Sci. U.S.A.">
        <title>Comparative genomics of the lactic acid bacteria.</title>
        <authorList>
            <person name="Makarova K.S."/>
            <person name="Slesarev A."/>
            <person name="Wolf Y.I."/>
            <person name="Sorokin A."/>
            <person name="Mirkin B."/>
            <person name="Koonin E.V."/>
            <person name="Pavlov A."/>
            <person name="Pavlova N."/>
            <person name="Karamychev V."/>
            <person name="Polouchine N."/>
            <person name="Shakhova V."/>
            <person name="Grigoriev I."/>
            <person name="Lou Y."/>
            <person name="Rohksar D."/>
            <person name="Lucas S."/>
            <person name="Huang K."/>
            <person name="Goodstein D.M."/>
            <person name="Hawkins T."/>
            <person name="Plengvidhya V."/>
            <person name="Welker D."/>
            <person name="Hughes J."/>
            <person name="Goh Y."/>
            <person name="Benson A."/>
            <person name="Baldwin K."/>
            <person name="Lee J.-H."/>
            <person name="Diaz-Muniz I."/>
            <person name="Dosti B."/>
            <person name="Smeianov V."/>
            <person name="Wechter W."/>
            <person name="Barabote R."/>
            <person name="Lorca G."/>
            <person name="Altermann E."/>
            <person name="Barrangou R."/>
            <person name="Ganesan B."/>
            <person name="Xie Y."/>
            <person name="Rawsthorne H."/>
            <person name="Tamir D."/>
            <person name="Parker C."/>
            <person name="Breidt F."/>
            <person name="Broadbent J.R."/>
            <person name="Hutkins R."/>
            <person name="O'Sullivan D."/>
            <person name="Steele J."/>
            <person name="Unlu G."/>
            <person name="Saier M.H. Jr."/>
            <person name="Klaenhammer T."/>
            <person name="Richardson P."/>
            <person name="Kozyavkin S."/>
            <person name="Weimer B.C."/>
            <person name="Mills D.A."/>
        </authorList>
    </citation>
    <scope>NUCLEOTIDE SEQUENCE [LARGE SCALE GENOMIC DNA]</scope>
    <source>
        <strain>ATCC BAA-331 / PSU-1</strain>
    </source>
</reference>
<keyword id="KW-1185">Reference proteome</keyword>
<keyword id="KW-0687">Ribonucleoprotein</keyword>
<keyword id="KW-0689">Ribosomal protein</keyword>
<dbReference type="EMBL" id="CP000411">
    <property type="protein sequence ID" value="ABJ57152.1"/>
    <property type="molecule type" value="Genomic_DNA"/>
</dbReference>
<dbReference type="RefSeq" id="WP_002816950.1">
    <property type="nucleotide sequence ID" value="NC_008528.1"/>
</dbReference>
<dbReference type="SMR" id="Q04EH0"/>
<dbReference type="STRING" id="203123.OEOE_1279"/>
<dbReference type="GeneID" id="75065618"/>
<dbReference type="KEGG" id="ooe:OEOE_1279"/>
<dbReference type="eggNOG" id="COG0291">
    <property type="taxonomic scope" value="Bacteria"/>
</dbReference>
<dbReference type="HOGENOM" id="CLU_169643_3_1_9"/>
<dbReference type="Proteomes" id="UP000000774">
    <property type="component" value="Chromosome"/>
</dbReference>
<dbReference type="GO" id="GO:0022625">
    <property type="term" value="C:cytosolic large ribosomal subunit"/>
    <property type="evidence" value="ECO:0007669"/>
    <property type="project" value="TreeGrafter"/>
</dbReference>
<dbReference type="GO" id="GO:0003735">
    <property type="term" value="F:structural constituent of ribosome"/>
    <property type="evidence" value="ECO:0007669"/>
    <property type="project" value="InterPro"/>
</dbReference>
<dbReference type="GO" id="GO:0006412">
    <property type="term" value="P:translation"/>
    <property type="evidence" value="ECO:0007669"/>
    <property type="project" value="UniProtKB-UniRule"/>
</dbReference>
<dbReference type="FunFam" id="4.10.410.60:FF:000001">
    <property type="entry name" value="50S ribosomal protein L35"/>
    <property type="match status" value="1"/>
</dbReference>
<dbReference type="Gene3D" id="4.10.410.60">
    <property type="match status" value="1"/>
</dbReference>
<dbReference type="HAMAP" id="MF_00514">
    <property type="entry name" value="Ribosomal_bL35"/>
    <property type="match status" value="1"/>
</dbReference>
<dbReference type="InterPro" id="IPR001706">
    <property type="entry name" value="Ribosomal_bL35"/>
</dbReference>
<dbReference type="InterPro" id="IPR021137">
    <property type="entry name" value="Ribosomal_bL35-like"/>
</dbReference>
<dbReference type="InterPro" id="IPR018265">
    <property type="entry name" value="Ribosomal_bL35_CS"/>
</dbReference>
<dbReference type="InterPro" id="IPR037229">
    <property type="entry name" value="Ribosomal_bL35_sf"/>
</dbReference>
<dbReference type="NCBIfam" id="TIGR00001">
    <property type="entry name" value="rpmI_bact"/>
    <property type="match status" value="1"/>
</dbReference>
<dbReference type="PANTHER" id="PTHR33343">
    <property type="entry name" value="54S RIBOSOMAL PROTEIN BL35M"/>
    <property type="match status" value="1"/>
</dbReference>
<dbReference type="PANTHER" id="PTHR33343:SF1">
    <property type="entry name" value="LARGE RIBOSOMAL SUBUNIT PROTEIN BL35M"/>
    <property type="match status" value="1"/>
</dbReference>
<dbReference type="Pfam" id="PF01632">
    <property type="entry name" value="Ribosomal_L35p"/>
    <property type="match status" value="1"/>
</dbReference>
<dbReference type="PRINTS" id="PR00064">
    <property type="entry name" value="RIBOSOMALL35"/>
</dbReference>
<dbReference type="SUPFAM" id="SSF143034">
    <property type="entry name" value="L35p-like"/>
    <property type="match status" value="1"/>
</dbReference>
<dbReference type="PROSITE" id="PS00936">
    <property type="entry name" value="RIBOSOMAL_L35"/>
    <property type="match status" value="1"/>
</dbReference>
<protein>
    <recommendedName>
        <fullName evidence="1">Large ribosomal subunit protein bL35</fullName>
    </recommendedName>
    <alternativeName>
        <fullName evidence="3">50S ribosomal protein L35</fullName>
    </alternativeName>
</protein>
<gene>
    <name evidence="1" type="primary">rpmI</name>
    <name type="ordered locus">OEOE_1279</name>
</gene>
<sequence length="65" mass="7426">MPKMKTNRASAKRFKKTASGGFKAGQAFTSHRFHGKTKKQRRQLRGTAMMNKVNVKRYAKILSNL</sequence>
<proteinExistence type="inferred from homology"/>
<feature type="chain" id="PRO_1000050731" description="Large ribosomal subunit protein bL35">
    <location>
        <begin position="1"/>
        <end position="65"/>
    </location>
</feature>
<feature type="region of interest" description="Disordered" evidence="2">
    <location>
        <begin position="1"/>
        <end position="26"/>
    </location>
</feature>